<feature type="chain" id="PRO_1000024576" description="ATP-dependent Clp protease ATP-binding subunit ClpX">
    <location>
        <begin position="1"/>
        <end position="420"/>
    </location>
</feature>
<feature type="domain" description="ClpX-type ZB" evidence="2">
    <location>
        <begin position="3"/>
        <end position="57"/>
    </location>
</feature>
<feature type="binding site" evidence="2">
    <location>
        <position position="16"/>
    </location>
    <ligand>
        <name>Zn(2+)</name>
        <dbReference type="ChEBI" id="CHEBI:29105"/>
    </ligand>
</feature>
<feature type="binding site" evidence="2">
    <location>
        <position position="19"/>
    </location>
    <ligand>
        <name>Zn(2+)</name>
        <dbReference type="ChEBI" id="CHEBI:29105"/>
    </ligand>
</feature>
<feature type="binding site" evidence="2">
    <location>
        <position position="38"/>
    </location>
    <ligand>
        <name>Zn(2+)</name>
        <dbReference type="ChEBI" id="CHEBI:29105"/>
    </ligand>
</feature>
<feature type="binding site" evidence="2">
    <location>
        <position position="41"/>
    </location>
    <ligand>
        <name>Zn(2+)</name>
        <dbReference type="ChEBI" id="CHEBI:29105"/>
    </ligand>
</feature>
<feature type="binding site" evidence="1">
    <location>
        <begin position="122"/>
        <end position="129"/>
    </location>
    <ligand>
        <name>ATP</name>
        <dbReference type="ChEBI" id="CHEBI:30616"/>
    </ligand>
</feature>
<evidence type="ECO:0000255" key="1">
    <source>
        <dbReference type="HAMAP-Rule" id="MF_00175"/>
    </source>
</evidence>
<evidence type="ECO:0000255" key="2">
    <source>
        <dbReference type="PROSITE-ProRule" id="PRU01250"/>
    </source>
</evidence>
<reference key="1">
    <citation type="journal article" date="2006" name="Proc. Natl. Acad. Sci. U.S.A.">
        <title>Genome reduction in Leptospira borgpetersenii reflects limited transmission potential.</title>
        <authorList>
            <person name="Bulach D.M."/>
            <person name="Zuerner R.L."/>
            <person name="Wilson P."/>
            <person name="Seemann T."/>
            <person name="McGrath A."/>
            <person name="Cullen P.A."/>
            <person name="Davis J."/>
            <person name="Johnson M."/>
            <person name="Kuczek E."/>
            <person name="Alt D.P."/>
            <person name="Peterson-Burch B."/>
            <person name="Coppel R.L."/>
            <person name="Rood J.I."/>
            <person name="Davies J.K."/>
            <person name="Adler B."/>
        </authorList>
    </citation>
    <scope>NUCLEOTIDE SEQUENCE [LARGE SCALE GENOMIC DNA]</scope>
    <source>
        <strain>L550</strain>
    </source>
</reference>
<comment type="function">
    <text evidence="1">ATP-dependent specificity component of the Clp protease. It directs the protease to specific substrates. Can perform chaperone functions in the absence of ClpP.</text>
</comment>
<comment type="subunit">
    <text evidence="1">Component of the ClpX-ClpP complex. Forms a hexameric ring that, in the presence of ATP, binds to fourteen ClpP subunits assembled into a disk-like structure with a central cavity, resembling the structure of eukaryotic proteasomes.</text>
</comment>
<comment type="similarity">
    <text evidence="1">Belongs to the ClpX chaperone family.</text>
</comment>
<gene>
    <name evidence="1" type="primary">clpX</name>
    <name type="ordered locus">LBL_1142</name>
</gene>
<proteinExistence type="inferred from homology"/>
<keyword id="KW-0067">ATP-binding</keyword>
<keyword id="KW-0143">Chaperone</keyword>
<keyword id="KW-0479">Metal-binding</keyword>
<keyword id="KW-0547">Nucleotide-binding</keyword>
<keyword id="KW-0862">Zinc</keyword>
<protein>
    <recommendedName>
        <fullName evidence="1">ATP-dependent Clp protease ATP-binding subunit ClpX</fullName>
    </recommendedName>
</protein>
<name>CLPX_LEPBL</name>
<sequence>MAKKTPGTNGKQKLFCSFCGKEQDAVKRLVAGPGVYICDECISLCNEIIAEDHEHSHEKSEVFSEIPNPVDIKSILDQYVIGQDHAKKALSVAVYNHYKRVNLKEKKSDVEIEKSNILLIGPTGSGKTLLAQTLARIIKVPFAIVDATALTEAGYVGEDVENIILKLIQNAENDIKKAEIGIIYIDEVDKIARKSDSASITRDVSGEGVQQALLKIIEGTIANVPPQGGRKHPHQEYLQVDTKNILFILGGAFVDLPNIIKSRTGVKTIGFGSEEQRIQAENKDTLMEQVIPEDLIKFGLIPEFIGRLPIVATLQELNVDMLKQIFREPKNSVLKQYTRLLELENVKLTFHEDAIDKIAELAIKRESGARGLRAIVENIMLDLMFDIPSRKDIEEVIITAEVITDRVTPTLILKKESKIA</sequence>
<accession>Q052U5</accession>
<dbReference type="EMBL" id="CP000348">
    <property type="protein sequence ID" value="ABJ78650.1"/>
    <property type="molecule type" value="Genomic_DNA"/>
</dbReference>
<dbReference type="RefSeq" id="WP_002755134.1">
    <property type="nucleotide sequence ID" value="NC_008508.1"/>
</dbReference>
<dbReference type="SMR" id="Q052U5"/>
<dbReference type="KEGG" id="lbl:LBL_1142"/>
<dbReference type="HOGENOM" id="CLU_014218_8_2_12"/>
<dbReference type="GO" id="GO:0009376">
    <property type="term" value="C:HslUV protease complex"/>
    <property type="evidence" value="ECO:0007669"/>
    <property type="project" value="TreeGrafter"/>
</dbReference>
<dbReference type="GO" id="GO:0005524">
    <property type="term" value="F:ATP binding"/>
    <property type="evidence" value="ECO:0007669"/>
    <property type="project" value="UniProtKB-UniRule"/>
</dbReference>
<dbReference type="GO" id="GO:0016887">
    <property type="term" value="F:ATP hydrolysis activity"/>
    <property type="evidence" value="ECO:0007669"/>
    <property type="project" value="InterPro"/>
</dbReference>
<dbReference type="GO" id="GO:0140662">
    <property type="term" value="F:ATP-dependent protein folding chaperone"/>
    <property type="evidence" value="ECO:0007669"/>
    <property type="project" value="InterPro"/>
</dbReference>
<dbReference type="GO" id="GO:0046983">
    <property type="term" value="F:protein dimerization activity"/>
    <property type="evidence" value="ECO:0007669"/>
    <property type="project" value="InterPro"/>
</dbReference>
<dbReference type="GO" id="GO:0051082">
    <property type="term" value="F:unfolded protein binding"/>
    <property type="evidence" value="ECO:0007669"/>
    <property type="project" value="UniProtKB-UniRule"/>
</dbReference>
<dbReference type="GO" id="GO:0008270">
    <property type="term" value="F:zinc ion binding"/>
    <property type="evidence" value="ECO:0007669"/>
    <property type="project" value="InterPro"/>
</dbReference>
<dbReference type="GO" id="GO:0051301">
    <property type="term" value="P:cell division"/>
    <property type="evidence" value="ECO:0007669"/>
    <property type="project" value="TreeGrafter"/>
</dbReference>
<dbReference type="GO" id="GO:0051603">
    <property type="term" value="P:proteolysis involved in protein catabolic process"/>
    <property type="evidence" value="ECO:0007669"/>
    <property type="project" value="TreeGrafter"/>
</dbReference>
<dbReference type="CDD" id="cd19497">
    <property type="entry name" value="RecA-like_ClpX"/>
    <property type="match status" value="1"/>
</dbReference>
<dbReference type="FunFam" id="1.10.8.60:FF:000002">
    <property type="entry name" value="ATP-dependent Clp protease ATP-binding subunit ClpX"/>
    <property type="match status" value="1"/>
</dbReference>
<dbReference type="FunFam" id="3.40.50.300:FF:000005">
    <property type="entry name" value="ATP-dependent Clp protease ATP-binding subunit ClpX"/>
    <property type="match status" value="1"/>
</dbReference>
<dbReference type="Gene3D" id="1.10.8.60">
    <property type="match status" value="1"/>
</dbReference>
<dbReference type="Gene3D" id="6.20.220.10">
    <property type="entry name" value="ClpX chaperone, C4-type zinc finger domain"/>
    <property type="match status" value="1"/>
</dbReference>
<dbReference type="Gene3D" id="3.40.50.300">
    <property type="entry name" value="P-loop containing nucleotide triphosphate hydrolases"/>
    <property type="match status" value="1"/>
</dbReference>
<dbReference type="HAMAP" id="MF_00175">
    <property type="entry name" value="ClpX"/>
    <property type="match status" value="1"/>
</dbReference>
<dbReference type="InterPro" id="IPR003593">
    <property type="entry name" value="AAA+_ATPase"/>
</dbReference>
<dbReference type="InterPro" id="IPR050052">
    <property type="entry name" value="ATP-dep_Clp_protease_ClpX"/>
</dbReference>
<dbReference type="InterPro" id="IPR003959">
    <property type="entry name" value="ATPase_AAA_core"/>
</dbReference>
<dbReference type="InterPro" id="IPR019489">
    <property type="entry name" value="Clp_ATPase_C"/>
</dbReference>
<dbReference type="InterPro" id="IPR004487">
    <property type="entry name" value="Clp_protease_ATP-bd_su_ClpX"/>
</dbReference>
<dbReference type="InterPro" id="IPR046425">
    <property type="entry name" value="ClpX_bact"/>
</dbReference>
<dbReference type="InterPro" id="IPR027417">
    <property type="entry name" value="P-loop_NTPase"/>
</dbReference>
<dbReference type="InterPro" id="IPR010603">
    <property type="entry name" value="Znf_CppX_C4"/>
</dbReference>
<dbReference type="InterPro" id="IPR038366">
    <property type="entry name" value="Znf_CppX_C4_sf"/>
</dbReference>
<dbReference type="NCBIfam" id="TIGR00382">
    <property type="entry name" value="clpX"/>
    <property type="match status" value="1"/>
</dbReference>
<dbReference type="NCBIfam" id="NF003745">
    <property type="entry name" value="PRK05342.1"/>
    <property type="match status" value="1"/>
</dbReference>
<dbReference type="PANTHER" id="PTHR48102:SF7">
    <property type="entry name" value="ATP-DEPENDENT CLP PROTEASE ATP-BINDING SUBUNIT CLPX-LIKE, MITOCHONDRIAL"/>
    <property type="match status" value="1"/>
</dbReference>
<dbReference type="PANTHER" id="PTHR48102">
    <property type="entry name" value="ATP-DEPENDENT CLP PROTEASE ATP-BINDING SUBUNIT CLPX-LIKE, MITOCHONDRIAL-RELATED"/>
    <property type="match status" value="1"/>
</dbReference>
<dbReference type="Pfam" id="PF07724">
    <property type="entry name" value="AAA_2"/>
    <property type="match status" value="1"/>
</dbReference>
<dbReference type="Pfam" id="PF10431">
    <property type="entry name" value="ClpB_D2-small"/>
    <property type="match status" value="1"/>
</dbReference>
<dbReference type="Pfam" id="PF06689">
    <property type="entry name" value="zf-C4_ClpX"/>
    <property type="match status" value="1"/>
</dbReference>
<dbReference type="SMART" id="SM00382">
    <property type="entry name" value="AAA"/>
    <property type="match status" value="1"/>
</dbReference>
<dbReference type="SMART" id="SM01086">
    <property type="entry name" value="ClpB_D2-small"/>
    <property type="match status" value="1"/>
</dbReference>
<dbReference type="SMART" id="SM00994">
    <property type="entry name" value="zf-C4_ClpX"/>
    <property type="match status" value="1"/>
</dbReference>
<dbReference type="SUPFAM" id="SSF57716">
    <property type="entry name" value="Glucocorticoid receptor-like (DNA-binding domain)"/>
    <property type="match status" value="1"/>
</dbReference>
<dbReference type="SUPFAM" id="SSF52540">
    <property type="entry name" value="P-loop containing nucleoside triphosphate hydrolases"/>
    <property type="match status" value="1"/>
</dbReference>
<dbReference type="PROSITE" id="PS51902">
    <property type="entry name" value="CLPX_ZB"/>
    <property type="match status" value="1"/>
</dbReference>
<organism>
    <name type="scientific">Leptospira borgpetersenii serovar Hardjo-bovis (strain L550)</name>
    <dbReference type="NCBI Taxonomy" id="355276"/>
    <lineage>
        <taxon>Bacteria</taxon>
        <taxon>Pseudomonadati</taxon>
        <taxon>Spirochaetota</taxon>
        <taxon>Spirochaetia</taxon>
        <taxon>Leptospirales</taxon>
        <taxon>Leptospiraceae</taxon>
        <taxon>Leptospira</taxon>
    </lineage>
</organism>